<proteinExistence type="inferred from homology"/>
<comment type="function">
    <text evidence="1">Involved in the biosynthesis of isopentenyl diphosphate (IPP) and dimethylallyl diphosphate (DMAPP), two major building blocks of isoprenoid compounds. Catalyzes the conversion of 4-diphosphocytidyl-2-C-methyl-D-erythritol 2-phosphate (CDP-ME2P) to 2-C-methyl-D-erythritol 2,4-cyclodiphosphate (ME-CPP) with a corresponding release of cytidine 5-monophosphate (CMP).</text>
</comment>
<comment type="catalytic activity">
    <reaction evidence="1">
        <text>4-CDP-2-C-methyl-D-erythritol 2-phosphate = 2-C-methyl-D-erythritol 2,4-cyclic diphosphate + CMP</text>
        <dbReference type="Rhea" id="RHEA:23864"/>
        <dbReference type="ChEBI" id="CHEBI:57919"/>
        <dbReference type="ChEBI" id="CHEBI:58483"/>
        <dbReference type="ChEBI" id="CHEBI:60377"/>
        <dbReference type="EC" id="4.6.1.12"/>
    </reaction>
</comment>
<comment type="cofactor">
    <cofactor evidence="1">
        <name>a divalent metal cation</name>
        <dbReference type="ChEBI" id="CHEBI:60240"/>
    </cofactor>
    <text evidence="1">Binds 1 divalent metal cation per subunit.</text>
</comment>
<comment type="pathway">
    <text evidence="1">Isoprenoid biosynthesis; isopentenyl diphosphate biosynthesis via DXP pathway; isopentenyl diphosphate from 1-deoxy-D-xylulose 5-phosphate: step 4/6.</text>
</comment>
<comment type="subunit">
    <text evidence="1">Homotrimer.</text>
</comment>
<comment type="similarity">
    <text evidence="1">Belongs to the IspF family.</text>
</comment>
<evidence type="ECO:0000255" key="1">
    <source>
        <dbReference type="HAMAP-Rule" id="MF_00107"/>
    </source>
</evidence>
<dbReference type="EC" id="4.6.1.12" evidence="1"/>
<dbReference type="EMBL" id="BX640413">
    <property type="protein sequence ID" value="CAE41169.1"/>
    <property type="molecule type" value="Genomic_DNA"/>
</dbReference>
<dbReference type="RefSeq" id="NP_879676.1">
    <property type="nucleotide sequence ID" value="NC_002929.2"/>
</dbReference>
<dbReference type="RefSeq" id="WP_003813893.1">
    <property type="nucleotide sequence ID" value="NZ_CP039022.1"/>
</dbReference>
<dbReference type="SMR" id="Q7VZN1"/>
<dbReference type="STRING" id="257313.BP0866"/>
<dbReference type="PaxDb" id="257313-BP0866"/>
<dbReference type="GeneID" id="93205148"/>
<dbReference type="KEGG" id="bpe:BP0866"/>
<dbReference type="PATRIC" id="fig|257313.5.peg.921"/>
<dbReference type="eggNOG" id="COG0245">
    <property type="taxonomic scope" value="Bacteria"/>
</dbReference>
<dbReference type="HOGENOM" id="CLU_084630_2_0_4"/>
<dbReference type="UniPathway" id="UPA00056">
    <property type="reaction ID" value="UER00095"/>
</dbReference>
<dbReference type="Proteomes" id="UP000002676">
    <property type="component" value="Chromosome"/>
</dbReference>
<dbReference type="GO" id="GO:0008685">
    <property type="term" value="F:2-C-methyl-D-erythritol 2,4-cyclodiphosphate synthase activity"/>
    <property type="evidence" value="ECO:0007669"/>
    <property type="project" value="UniProtKB-UniRule"/>
</dbReference>
<dbReference type="GO" id="GO:0046872">
    <property type="term" value="F:metal ion binding"/>
    <property type="evidence" value="ECO:0007669"/>
    <property type="project" value="UniProtKB-KW"/>
</dbReference>
<dbReference type="GO" id="GO:0019288">
    <property type="term" value="P:isopentenyl diphosphate biosynthetic process, methylerythritol 4-phosphate pathway"/>
    <property type="evidence" value="ECO:0007669"/>
    <property type="project" value="UniProtKB-UniRule"/>
</dbReference>
<dbReference type="GO" id="GO:0016114">
    <property type="term" value="P:terpenoid biosynthetic process"/>
    <property type="evidence" value="ECO:0007669"/>
    <property type="project" value="InterPro"/>
</dbReference>
<dbReference type="CDD" id="cd00554">
    <property type="entry name" value="MECDP_synthase"/>
    <property type="match status" value="1"/>
</dbReference>
<dbReference type="FunFam" id="3.30.1330.50:FF:000001">
    <property type="entry name" value="2-C-methyl-D-erythritol 2,4-cyclodiphosphate synthase"/>
    <property type="match status" value="1"/>
</dbReference>
<dbReference type="Gene3D" id="3.30.1330.50">
    <property type="entry name" value="2-C-methyl-D-erythritol 2,4-cyclodiphosphate synthase"/>
    <property type="match status" value="1"/>
</dbReference>
<dbReference type="HAMAP" id="MF_00107">
    <property type="entry name" value="IspF"/>
    <property type="match status" value="1"/>
</dbReference>
<dbReference type="InterPro" id="IPR003526">
    <property type="entry name" value="MECDP_synthase"/>
</dbReference>
<dbReference type="InterPro" id="IPR020555">
    <property type="entry name" value="MECDP_synthase_CS"/>
</dbReference>
<dbReference type="InterPro" id="IPR036571">
    <property type="entry name" value="MECDP_synthase_sf"/>
</dbReference>
<dbReference type="NCBIfam" id="TIGR00151">
    <property type="entry name" value="ispF"/>
    <property type="match status" value="1"/>
</dbReference>
<dbReference type="PANTHER" id="PTHR43181">
    <property type="entry name" value="2-C-METHYL-D-ERYTHRITOL 2,4-CYCLODIPHOSPHATE SYNTHASE, CHLOROPLASTIC"/>
    <property type="match status" value="1"/>
</dbReference>
<dbReference type="PANTHER" id="PTHR43181:SF1">
    <property type="entry name" value="2-C-METHYL-D-ERYTHRITOL 2,4-CYCLODIPHOSPHATE SYNTHASE, CHLOROPLASTIC"/>
    <property type="match status" value="1"/>
</dbReference>
<dbReference type="Pfam" id="PF02542">
    <property type="entry name" value="YgbB"/>
    <property type="match status" value="1"/>
</dbReference>
<dbReference type="SUPFAM" id="SSF69765">
    <property type="entry name" value="IpsF-like"/>
    <property type="match status" value="1"/>
</dbReference>
<dbReference type="PROSITE" id="PS01350">
    <property type="entry name" value="ISPF"/>
    <property type="match status" value="1"/>
</dbReference>
<accession>Q7VZN1</accession>
<reference key="1">
    <citation type="journal article" date="2003" name="Nat. Genet.">
        <title>Comparative analysis of the genome sequences of Bordetella pertussis, Bordetella parapertussis and Bordetella bronchiseptica.</title>
        <authorList>
            <person name="Parkhill J."/>
            <person name="Sebaihia M."/>
            <person name="Preston A."/>
            <person name="Murphy L.D."/>
            <person name="Thomson N.R."/>
            <person name="Harris D.E."/>
            <person name="Holden M.T.G."/>
            <person name="Churcher C.M."/>
            <person name="Bentley S.D."/>
            <person name="Mungall K.L."/>
            <person name="Cerdeno-Tarraga A.-M."/>
            <person name="Temple L."/>
            <person name="James K.D."/>
            <person name="Harris B."/>
            <person name="Quail M.A."/>
            <person name="Achtman M."/>
            <person name="Atkin R."/>
            <person name="Baker S."/>
            <person name="Basham D."/>
            <person name="Bason N."/>
            <person name="Cherevach I."/>
            <person name="Chillingworth T."/>
            <person name="Collins M."/>
            <person name="Cronin A."/>
            <person name="Davis P."/>
            <person name="Doggett J."/>
            <person name="Feltwell T."/>
            <person name="Goble A."/>
            <person name="Hamlin N."/>
            <person name="Hauser H."/>
            <person name="Holroyd S."/>
            <person name="Jagels K."/>
            <person name="Leather S."/>
            <person name="Moule S."/>
            <person name="Norberczak H."/>
            <person name="O'Neil S."/>
            <person name="Ormond D."/>
            <person name="Price C."/>
            <person name="Rabbinowitsch E."/>
            <person name="Rutter S."/>
            <person name="Sanders M."/>
            <person name="Saunders D."/>
            <person name="Seeger K."/>
            <person name="Sharp S."/>
            <person name="Simmonds M."/>
            <person name="Skelton J."/>
            <person name="Squares R."/>
            <person name="Squares S."/>
            <person name="Stevens K."/>
            <person name="Unwin L."/>
            <person name="Whitehead S."/>
            <person name="Barrell B.G."/>
            <person name="Maskell D.J."/>
        </authorList>
    </citation>
    <scope>NUCLEOTIDE SEQUENCE [LARGE SCALE GENOMIC DNA]</scope>
    <source>
        <strain>Tohama I / ATCC BAA-589 / NCTC 13251</strain>
    </source>
</reference>
<name>ISPF_BORPE</name>
<feature type="chain" id="PRO_0000189446" description="2-C-methyl-D-erythritol 2,4-cyclodiphosphate synthase">
    <location>
        <begin position="1"/>
        <end position="162"/>
    </location>
</feature>
<feature type="binding site" evidence="1">
    <location>
        <begin position="12"/>
        <end position="14"/>
    </location>
    <ligand>
        <name>4-CDP-2-C-methyl-D-erythritol 2-phosphate</name>
        <dbReference type="ChEBI" id="CHEBI:57919"/>
    </ligand>
</feature>
<feature type="binding site" evidence="1">
    <location>
        <position position="12"/>
    </location>
    <ligand>
        <name>a divalent metal cation</name>
        <dbReference type="ChEBI" id="CHEBI:60240"/>
    </ligand>
</feature>
<feature type="binding site" evidence="1">
    <location>
        <position position="14"/>
    </location>
    <ligand>
        <name>a divalent metal cation</name>
        <dbReference type="ChEBI" id="CHEBI:60240"/>
    </ligand>
</feature>
<feature type="binding site" evidence="1">
    <location>
        <begin position="38"/>
        <end position="39"/>
    </location>
    <ligand>
        <name>4-CDP-2-C-methyl-D-erythritol 2-phosphate</name>
        <dbReference type="ChEBI" id="CHEBI:57919"/>
    </ligand>
</feature>
<feature type="binding site" evidence="1">
    <location>
        <position position="46"/>
    </location>
    <ligand>
        <name>a divalent metal cation</name>
        <dbReference type="ChEBI" id="CHEBI:60240"/>
    </ligand>
</feature>
<feature type="binding site" evidence="1">
    <location>
        <begin position="60"/>
        <end position="62"/>
    </location>
    <ligand>
        <name>4-CDP-2-C-methyl-D-erythritol 2-phosphate</name>
        <dbReference type="ChEBI" id="CHEBI:57919"/>
    </ligand>
</feature>
<feature type="binding site" evidence="1">
    <location>
        <begin position="65"/>
        <end position="69"/>
    </location>
    <ligand>
        <name>4-CDP-2-C-methyl-D-erythritol 2-phosphate</name>
        <dbReference type="ChEBI" id="CHEBI:57919"/>
    </ligand>
</feature>
<feature type="binding site" evidence="1">
    <location>
        <position position="146"/>
    </location>
    <ligand>
        <name>4-CDP-2-C-methyl-D-erythritol 2-phosphate</name>
        <dbReference type="ChEBI" id="CHEBI:57919"/>
    </ligand>
</feature>
<feature type="site" description="Transition state stabilizer" evidence="1">
    <location>
        <position position="38"/>
    </location>
</feature>
<feature type="site" description="Transition state stabilizer" evidence="1">
    <location>
        <position position="137"/>
    </location>
</feature>
<protein>
    <recommendedName>
        <fullName evidence="1">2-C-methyl-D-erythritol 2,4-cyclodiphosphate synthase</fullName>
        <shortName evidence="1">MECDP-synthase</shortName>
        <shortName evidence="1">MECPP-synthase</shortName>
        <shortName evidence="1">MECPS</shortName>
        <ecNumber evidence="1">4.6.1.12</ecNumber>
    </recommendedName>
</protein>
<keyword id="KW-0414">Isoprene biosynthesis</keyword>
<keyword id="KW-0456">Lyase</keyword>
<keyword id="KW-0479">Metal-binding</keyword>
<keyword id="KW-1185">Reference proteome</keyword>
<organism>
    <name type="scientific">Bordetella pertussis (strain Tohama I / ATCC BAA-589 / NCTC 13251)</name>
    <dbReference type="NCBI Taxonomy" id="257313"/>
    <lineage>
        <taxon>Bacteria</taxon>
        <taxon>Pseudomonadati</taxon>
        <taxon>Pseudomonadota</taxon>
        <taxon>Betaproteobacteria</taxon>
        <taxon>Burkholderiales</taxon>
        <taxon>Alcaligenaceae</taxon>
        <taxon>Bordetella</taxon>
    </lineage>
</organism>
<sequence>MNIPFRVGQGFDVHALVEGRPLIIGGVTIAHTHGLLGHSDADVLLHAVTDALLGGAGLGDIGRHFPDTDPAYRGADSRVLLRAAFDKVRAAGWAPVNVDATIHAQAPKIGPHAAAMVANIAADLALDAGAVNIKAKTNEGLGYLGRKEGIAANVVVLLARAG</sequence>
<gene>
    <name evidence="1" type="primary">ispF</name>
    <name type="synonym">mecS</name>
    <name type="ordered locus">BP0866</name>
</gene>